<accession>Q9H5P4</accession>
<accession>D5FJ77</accession>
<accession>Q8N321</accession>
<sequence length="1033" mass="111752">MAQGFAVGFDPLGLGDLSSGSLSSLSSRGHLGSDSGSTATRYLLRKQQRLLNGPPRGIRASSPMGRVILINSPIEANSDESDIIHSVRVEKSPAGRLGFSVRGGSEHGLGIFVSKVEEGSSAERAGLCVGDKITEVNGLSLESTTMGSAVKVLTSSSRLHMMVRRMGRVPGIKFSKEKTTWVDVVNRRLVVEKCGSTPSDTSSEDGVRRIVHLYTTSDDFCLGFNIRGGKEFGLGIYVSKVDHGGLAEENGIKVGDQVLAANGVRFDDISHSQAVEVLKGQTHIMLTIKETGRYPAYKEMVSEYCWLDRLSNGVLQQLSPASESSSSVSSCASSAPYSSGSLPSDRMDICLGQEEPGSRGPGWGRADTAMQTEPDAGGRVETWCSVRPTVILRDTAIRSDGPHPGRRLDSALSESPKTALLLALSRPRPPITRSQSYLTLWEEKQQRKKEKSGSPGEKGALQRSKTLMNLFFKGGRQGRLARDGRREAWTLDSGSLAKTYPRLDIEKAGGVGPVQKFVTWRLRRDQERGRALLSARSGSPSSQLPNVDEQVQAWESRRPLIQDLAQRLLTDDEVLAVTRHCSRYVHEGGIEDLVRPLLAILDRPEKLLLLQDIRSVVAPTDLGRFDSMVMLVELEAFEALKSRAVRPPALRPARQDTPPKRHLITPVPDSRGGFYLLPVNGFPEEEDNGELRERLGALKVSPSASAPRHPHKGIPPLQDVPVDAFTPLRIACTPPPQLPPVAPRPLRPNWLLTEPLSREHPPQSQIRGRAQSRSRSRSRSRSRSSRGQGKSPGRRSPSPVPTPAPSMTNGRYHKPRKARPPLPRPLDGEAAKVGAKQGPSESGTEGTAKEAAMKNPSGELKTVTLSKMKQSLGISISGGIESKVQPMVKIEKIFPGGAAFLSGALQAGFELVAVDGENLEQVTHQRAVDTIRRAYRNKAREPMELVVRVPGPSPRPSPSDSSALTDGGLPADHLPAHQPLDAAPVPAHWLPEPPTNPQTPPTDARLLQPTPSPAPSPALQTPDSKPAPSPRIP</sequence>
<name>PDZD7_HUMAN</name>
<proteinExistence type="evidence at protein level"/>
<protein>
    <recommendedName>
        <fullName evidence="9">PDZ domain-containing protein 7</fullName>
    </recommendedName>
</protein>
<keyword id="KW-0002">3D-structure</keyword>
<keyword id="KW-0025">Alternative splicing</keyword>
<keyword id="KW-0966">Cell projection</keyword>
<keyword id="KW-0160">Chromosomal rearrangement</keyword>
<keyword id="KW-0969">Cilium</keyword>
<keyword id="KW-0209">Deafness</keyword>
<keyword id="KW-0225">Disease variant</keyword>
<keyword id="KW-1010">Non-syndromic deafness</keyword>
<keyword id="KW-0539">Nucleus</keyword>
<keyword id="KW-1267">Proteomics identification</keyword>
<keyword id="KW-1185">Reference proteome</keyword>
<keyword id="KW-0677">Repeat</keyword>
<keyword id="KW-0682">Retinitis pigmentosa</keyword>
<keyword id="KW-0836">Usher syndrome</keyword>
<evidence type="ECO:0000250" key="1">
    <source>
        <dbReference type="UniProtKB" id="E9Q9W7"/>
    </source>
</evidence>
<evidence type="ECO:0000255" key="2">
    <source>
        <dbReference type="PROSITE-ProRule" id="PRU00143"/>
    </source>
</evidence>
<evidence type="ECO:0000256" key="3">
    <source>
        <dbReference type="SAM" id="MobiDB-lite"/>
    </source>
</evidence>
<evidence type="ECO:0000269" key="4">
    <source>
    </source>
</evidence>
<evidence type="ECO:0000269" key="5">
    <source>
    </source>
</evidence>
<evidence type="ECO:0000269" key="6">
    <source>
    </source>
</evidence>
<evidence type="ECO:0000269" key="7">
    <source>
    </source>
</evidence>
<evidence type="ECO:0000269" key="8">
    <source>
    </source>
</evidence>
<evidence type="ECO:0000305" key="9"/>
<evidence type="ECO:0000312" key="10">
    <source>
        <dbReference type="HGNC" id="HGNC:26257"/>
    </source>
</evidence>
<evidence type="ECO:0007829" key="11">
    <source>
        <dbReference type="PDB" id="2EEH"/>
    </source>
</evidence>
<evidence type="ECO:0007829" key="12">
    <source>
        <dbReference type="PDB" id="7PC5"/>
    </source>
</evidence>
<feature type="chain" id="PRO_0000058297" description="PDZ domain-containing protein 7">
    <location>
        <begin position="1"/>
        <end position="1033"/>
    </location>
</feature>
<feature type="domain" description="PDZ 1" evidence="2">
    <location>
        <begin position="86"/>
        <end position="168"/>
    </location>
</feature>
<feature type="domain" description="PDZ 2" evidence="2">
    <location>
        <begin position="210"/>
        <end position="293"/>
    </location>
</feature>
<feature type="domain" description="PDZ 3" evidence="2">
    <location>
        <begin position="862"/>
        <end position="934"/>
    </location>
</feature>
<feature type="region of interest" description="Disordered" evidence="3">
    <location>
        <begin position="323"/>
        <end position="380"/>
    </location>
</feature>
<feature type="region of interest" description="Disordered" evidence="3">
    <location>
        <begin position="444"/>
        <end position="464"/>
    </location>
</feature>
<feature type="region of interest" description="Disordered" evidence="3">
    <location>
        <begin position="754"/>
        <end position="864"/>
    </location>
</feature>
<feature type="region of interest" description="Disordered" evidence="3">
    <location>
        <begin position="943"/>
        <end position="1033"/>
    </location>
</feature>
<feature type="compositionally biased region" description="Low complexity" evidence="3">
    <location>
        <begin position="323"/>
        <end position="344"/>
    </location>
</feature>
<feature type="compositionally biased region" description="Basic residues" evidence="3">
    <location>
        <begin position="770"/>
        <end position="784"/>
    </location>
</feature>
<feature type="compositionally biased region" description="Low complexity" evidence="3">
    <location>
        <begin position="785"/>
        <end position="797"/>
    </location>
</feature>
<feature type="compositionally biased region" description="Pro residues" evidence="3">
    <location>
        <begin position="991"/>
        <end position="1000"/>
    </location>
</feature>
<feature type="splice variant" id="VSP_059941" description="In isoform 3.">
    <original>AGGVGPVQKFVTWRLRRDQERGRALLSARSGSPSSQLPNVDEQVQAWESRRPLIQDLAQRLLTDDEVLAVTRHCSRYVHEGGIEDLVRPLLAILDRPEKLLLLQDIRSVVAPTDLGRFDSMVMLVELEAFEALKSRAVRPPALRPARQDTPPKRHLITPVPDSRGGFYLLPVNGFPEEEDNGELRERLGALKVSPSASAPRHPHKGIPPLQDVPVDAFTPLRIACTPPPQLPPVAPRPLRPNWLLTEPLSREHPPQSQIRGRAQSRSRSRSRSRSRSSRGQGKSPGRRSPSPVPTPAPSMTNGRYHKPRKARPPLPRPLDGEAAKVGAKQGPSESGTEGTAKEAAMKNPSGELKTVTLSKMKQSLGISISGGIESKVQPMVKIEKIFPGGAAFLSGALQAGFELVAVDGENLEQVTHQRAVDTIRRAYRNKAREPMELVVRVPGPSPRPSPSDSSALTDGGLPADHLPAHQPLDAAPVPAHWLPEPPTNPQTPPTDARLLQPTPSPAPSPALQTPDSKPAPSPRIP</original>
    <variation>EMGAT</variation>
    <location>
        <begin position="508"/>
        <end position="1033"/>
    </location>
</feature>
<feature type="splice variant" id="VSP_059942" description="In isoform 2.">
    <original>AGGVGPVQKF</original>
    <variation>EMGVSPCCPG</variation>
    <location>
        <begin position="508"/>
        <end position="517"/>
    </location>
</feature>
<feature type="splice variant" id="VSP_059943" description="In isoform 2.">
    <location>
        <begin position="518"/>
        <end position="1033"/>
    </location>
</feature>
<feature type="sequence variant" id="VAR_080820" description="In DFNB57; uncertain significance; dbSNP:rs1426679303." evidence="8">
    <original>R</original>
    <variation>L</variation>
    <location>
        <position position="66"/>
    </location>
</feature>
<feature type="sequence variant" id="VAR_080821" description="In DFNB57; dbSNP:rs148695069." evidence="6">
    <original>G</original>
    <variation>R</variation>
    <location>
        <position position="103"/>
    </location>
</feature>
<feature type="sequence variant" id="VAR_080822" description="In DFNB57; dbSNP:rs753034799." evidence="6">
    <original>G</original>
    <variation>R</variation>
    <location>
        <position position="228"/>
    </location>
</feature>
<feature type="sequence variant" id="VAR_080823" description="In DFNB57; dbSNP:rs1554835827." evidence="6">
    <original>M</original>
    <variation>R</variation>
    <location>
        <position position="285"/>
    </location>
</feature>
<feature type="sequence variant" id="VAR_080824" description="In DFNB57." evidence="6">
    <location>
        <begin position="500"/>
        <end position="1033"/>
    </location>
</feature>
<feature type="sequence variant" id="VAR_081066" description="In DFNB57." evidence="6">
    <location>
        <begin position="526"/>
        <end position="1033"/>
    </location>
</feature>
<feature type="sequence variant" id="VAR_081067" description="In DFNB57." evidence="7">
    <location>
        <begin position="550"/>
        <end position="1033"/>
    </location>
</feature>
<feature type="sequence conflict" description="In Ref. 4; AAH29054." evidence="9" ref="4">
    <location>
        <position position="449"/>
    </location>
</feature>
<feature type="strand" evidence="11">
    <location>
        <begin position="87"/>
        <end position="89"/>
    </location>
</feature>
<feature type="strand" evidence="11">
    <location>
        <begin position="93"/>
        <end position="96"/>
    </location>
</feature>
<feature type="strand" evidence="11">
    <location>
        <begin position="98"/>
        <end position="102"/>
    </location>
</feature>
<feature type="strand" evidence="11">
    <location>
        <begin position="105"/>
        <end position="108"/>
    </location>
</feature>
<feature type="strand" evidence="11">
    <location>
        <begin position="111"/>
        <end position="116"/>
    </location>
</feature>
<feature type="helix" evidence="11">
    <location>
        <begin position="121"/>
        <end position="125"/>
    </location>
</feature>
<feature type="strand" evidence="11">
    <location>
        <begin position="132"/>
        <end position="136"/>
    </location>
</feature>
<feature type="helix" evidence="11">
    <location>
        <begin position="146"/>
        <end position="154"/>
    </location>
</feature>
<feature type="strand" evidence="11">
    <location>
        <begin position="157"/>
        <end position="165"/>
    </location>
</feature>
<feature type="strand" evidence="12">
    <location>
        <begin position="860"/>
        <end position="865"/>
    </location>
</feature>
<feature type="strand" evidence="12">
    <location>
        <begin position="874"/>
        <end position="877"/>
    </location>
</feature>
<feature type="strand" evidence="12">
    <location>
        <begin position="889"/>
        <end position="893"/>
    </location>
</feature>
<feature type="helix" evidence="12">
    <location>
        <begin position="898"/>
        <end position="902"/>
    </location>
</feature>
<feature type="strand" evidence="12">
    <location>
        <begin position="910"/>
        <end position="914"/>
    </location>
</feature>
<feature type="helix" evidence="12">
    <location>
        <begin position="924"/>
        <end position="936"/>
    </location>
</feature>
<feature type="strand" evidence="12">
    <location>
        <begin position="942"/>
        <end position="948"/>
    </location>
</feature>
<reference key="1">
    <citation type="journal article" date="2010" name="J. Clin. Invest.">
        <title>PDZD7 is a modifier of retinal disease and a contributor to digenic Usher syndrome.</title>
        <authorList>
            <person name="Ebermann I."/>
            <person name="Phillips J.B."/>
            <person name="Liebau M.C."/>
            <person name="Koenekoop R.K."/>
            <person name="Schermer B."/>
            <person name="Lopez I."/>
            <person name="Schafer E."/>
            <person name="Roux A.F."/>
            <person name="Dafinger C."/>
            <person name="Bernd A."/>
            <person name="Zrenner E."/>
            <person name="Claustres M."/>
            <person name="Blanco B."/>
            <person name="Nurnberg G."/>
            <person name="Nurnberg P."/>
            <person name="Ruland R."/>
            <person name="Westerfield M."/>
            <person name="Benzing T."/>
            <person name="Bolz H.J."/>
        </authorList>
    </citation>
    <scope>NUCLEOTIDE SEQUENCE [MRNA] (ISOFORM 1)</scope>
    <scope>TISSUE SPECIFICITY</scope>
    <scope>SUBCELLULAR LOCATION</scope>
    <scope>INTERACTION WITH ADGRV1 AND USH2A</scope>
    <scope>INVOLVEMENT IN USH2A AND USH2C</scope>
    <scope>ALTERNATIVE SPLICING</scope>
</reference>
<reference key="2">
    <citation type="journal article" date="2004" name="Nat. Genet.">
        <title>Complete sequencing and characterization of 21,243 full-length human cDNAs.</title>
        <authorList>
            <person name="Ota T."/>
            <person name="Suzuki Y."/>
            <person name="Nishikawa T."/>
            <person name="Otsuki T."/>
            <person name="Sugiyama T."/>
            <person name="Irie R."/>
            <person name="Wakamatsu A."/>
            <person name="Hayashi K."/>
            <person name="Sato H."/>
            <person name="Nagai K."/>
            <person name="Kimura K."/>
            <person name="Makita H."/>
            <person name="Sekine M."/>
            <person name="Obayashi M."/>
            <person name="Nishi T."/>
            <person name="Shibahara T."/>
            <person name="Tanaka T."/>
            <person name="Ishii S."/>
            <person name="Yamamoto J."/>
            <person name="Saito K."/>
            <person name="Kawai Y."/>
            <person name="Isono Y."/>
            <person name="Nakamura Y."/>
            <person name="Nagahari K."/>
            <person name="Murakami K."/>
            <person name="Yasuda T."/>
            <person name="Iwayanagi T."/>
            <person name="Wagatsuma M."/>
            <person name="Shiratori A."/>
            <person name="Sudo H."/>
            <person name="Hosoiri T."/>
            <person name="Kaku Y."/>
            <person name="Kodaira H."/>
            <person name="Kondo H."/>
            <person name="Sugawara M."/>
            <person name="Takahashi M."/>
            <person name="Kanda K."/>
            <person name="Yokoi T."/>
            <person name="Furuya T."/>
            <person name="Kikkawa E."/>
            <person name="Omura Y."/>
            <person name="Abe K."/>
            <person name="Kamihara K."/>
            <person name="Katsuta N."/>
            <person name="Sato K."/>
            <person name="Tanikawa M."/>
            <person name="Yamazaki M."/>
            <person name="Ninomiya K."/>
            <person name="Ishibashi T."/>
            <person name="Yamashita H."/>
            <person name="Murakawa K."/>
            <person name="Fujimori K."/>
            <person name="Tanai H."/>
            <person name="Kimata M."/>
            <person name="Watanabe M."/>
            <person name="Hiraoka S."/>
            <person name="Chiba Y."/>
            <person name="Ishida S."/>
            <person name="Ono Y."/>
            <person name="Takiguchi S."/>
            <person name="Watanabe S."/>
            <person name="Yosida M."/>
            <person name="Hotuta T."/>
            <person name="Kusano J."/>
            <person name="Kanehori K."/>
            <person name="Takahashi-Fujii A."/>
            <person name="Hara H."/>
            <person name="Tanase T.-O."/>
            <person name="Nomura Y."/>
            <person name="Togiya S."/>
            <person name="Komai F."/>
            <person name="Hara R."/>
            <person name="Takeuchi K."/>
            <person name="Arita M."/>
            <person name="Imose N."/>
            <person name="Musashino K."/>
            <person name="Yuuki H."/>
            <person name="Oshima A."/>
            <person name="Sasaki N."/>
            <person name="Aotsuka S."/>
            <person name="Yoshikawa Y."/>
            <person name="Matsunawa H."/>
            <person name="Ichihara T."/>
            <person name="Shiohata N."/>
            <person name="Sano S."/>
            <person name="Moriya S."/>
            <person name="Momiyama H."/>
            <person name="Satoh N."/>
            <person name="Takami S."/>
            <person name="Terashima Y."/>
            <person name="Suzuki O."/>
            <person name="Nakagawa S."/>
            <person name="Senoh A."/>
            <person name="Mizoguchi H."/>
            <person name="Goto Y."/>
            <person name="Shimizu F."/>
            <person name="Wakebe H."/>
            <person name="Hishigaki H."/>
            <person name="Watanabe T."/>
            <person name="Sugiyama A."/>
            <person name="Takemoto M."/>
            <person name="Kawakami B."/>
            <person name="Yamazaki M."/>
            <person name="Watanabe K."/>
            <person name="Kumagai A."/>
            <person name="Itakura S."/>
            <person name="Fukuzumi Y."/>
            <person name="Fujimori Y."/>
            <person name="Komiyama M."/>
            <person name="Tashiro H."/>
            <person name="Tanigami A."/>
            <person name="Fujiwara T."/>
            <person name="Ono T."/>
            <person name="Yamada K."/>
            <person name="Fujii Y."/>
            <person name="Ozaki K."/>
            <person name="Hirao M."/>
            <person name="Ohmori Y."/>
            <person name="Kawabata A."/>
            <person name="Hikiji T."/>
            <person name="Kobatake N."/>
            <person name="Inagaki H."/>
            <person name="Ikema Y."/>
            <person name="Okamoto S."/>
            <person name="Okitani R."/>
            <person name="Kawakami T."/>
            <person name="Noguchi S."/>
            <person name="Itoh T."/>
            <person name="Shigeta K."/>
            <person name="Senba T."/>
            <person name="Matsumura K."/>
            <person name="Nakajima Y."/>
            <person name="Mizuno T."/>
            <person name="Morinaga M."/>
            <person name="Sasaki M."/>
            <person name="Togashi T."/>
            <person name="Oyama M."/>
            <person name="Hata H."/>
            <person name="Watanabe M."/>
            <person name="Komatsu T."/>
            <person name="Mizushima-Sugano J."/>
            <person name="Satoh T."/>
            <person name="Shirai Y."/>
            <person name="Takahashi Y."/>
            <person name="Nakagawa K."/>
            <person name="Okumura K."/>
            <person name="Nagase T."/>
            <person name="Nomura N."/>
            <person name="Kikuchi H."/>
            <person name="Masuho Y."/>
            <person name="Yamashita R."/>
            <person name="Nakai K."/>
            <person name="Yada T."/>
            <person name="Nakamura Y."/>
            <person name="Ohara O."/>
            <person name="Isogai T."/>
            <person name="Sugano S."/>
        </authorList>
    </citation>
    <scope>NUCLEOTIDE SEQUENCE [LARGE SCALE MRNA] (ISOFORM 2)</scope>
</reference>
<reference key="3">
    <citation type="journal article" date="2004" name="Nature">
        <title>The DNA sequence and comparative analysis of human chromosome 10.</title>
        <authorList>
            <person name="Deloukas P."/>
            <person name="Earthrowl M.E."/>
            <person name="Grafham D.V."/>
            <person name="Rubenfield M."/>
            <person name="French L."/>
            <person name="Steward C.A."/>
            <person name="Sims S.K."/>
            <person name="Jones M.C."/>
            <person name="Searle S."/>
            <person name="Scott C."/>
            <person name="Howe K."/>
            <person name="Hunt S.E."/>
            <person name="Andrews T.D."/>
            <person name="Gilbert J.G.R."/>
            <person name="Swarbreck D."/>
            <person name="Ashurst J.L."/>
            <person name="Taylor A."/>
            <person name="Battles J."/>
            <person name="Bird C.P."/>
            <person name="Ainscough R."/>
            <person name="Almeida J.P."/>
            <person name="Ashwell R.I.S."/>
            <person name="Ambrose K.D."/>
            <person name="Babbage A.K."/>
            <person name="Bagguley C.L."/>
            <person name="Bailey J."/>
            <person name="Banerjee R."/>
            <person name="Bates K."/>
            <person name="Beasley H."/>
            <person name="Bray-Allen S."/>
            <person name="Brown A.J."/>
            <person name="Brown J.Y."/>
            <person name="Burford D.C."/>
            <person name="Burrill W."/>
            <person name="Burton J."/>
            <person name="Cahill P."/>
            <person name="Camire D."/>
            <person name="Carter N.P."/>
            <person name="Chapman J.C."/>
            <person name="Clark S.Y."/>
            <person name="Clarke G."/>
            <person name="Clee C.M."/>
            <person name="Clegg S."/>
            <person name="Corby N."/>
            <person name="Coulson A."/>
            <person name="Dhami P."/>
            <person name="Dutta I."/>
            <person name="Dunn M."/>
            <person name="Faulkner L."/>
            <person name="Frankish A."/>
            <person name="Frankland J.A."/>
            <person name="Garner P."/>
            <person name="Garnett J."/>
            <person name="Gribble S."/>
            <person name="Griffiths C."/>
            <person name="Grocock R."/>
            <person name="Gustafson E."/>
            <person name="Hammond S."/>
            <person name="Harley J.L."/>
            <person name="Hart E."/>
            <person name="Heath P.D."/>
            <person name="Ho T.P."/>
            <person name="Hopkins B."/>
            <person name="Horne J."/>
            <person name="Howden P.J."/>
            <person name="Huckle E."/>
            <person name="Hynds C."/>
            <person name="Johnson C."/>
            <person name="Johnson D."/>
            <person name="Kana A."/>
            <person name="Kay M."/>
            <person name="Kimberley A.M."/>
            <person name="Kershaw J.K."/>
            <person name="Kokkinaki M."/>
            <person name="Laird G.K."/>
            <person name="Lawlor S."/>
            <person name="Lee H.M."/>
            <person name="Leongamornlert D.A."/>
            <person name="Laird G."/>
            <person name="Lloyd C."/>
            <person name="Lloyd D.M."/>
            <person name="Loveland J."/>
            <person name="Lovell J."/>
            <person name="McLaren S."/>
            <person name="McLay K.E."/>
            <person name="McMurray A."/>
            <person name="Mashreghi-Mohammadi M."/>
            <person name="Matthews L."/>
            <person name="Milne S."/>
            <person name="Nickerson T."/>
            <person name="Nguyen M."/>
            <person name="Overton-Larty E."/>
            <person name="Palmer S.A."/>
            <person name="Pearce A.V."/>
            <person name="Peck A.I."/>
            <person name="Pelan S."/>
            <person name="Phillimore B."/>
            <person name="Porter K."/>
            <person name="Rice C.M."/>
            <person name="Rogosin A."/>
            <person name="Ross M.T."/>
            <person name="Sarafidou T."/>
            <person name="Sehra H.K."/>
            <person name="Shownkeen R."/>
            <person name="Skuce C.D."/>
            <person name="Smith M."/>
            <person name="Standring L."/>
            <person name="Sycamore N."/>
            <person name="Tester J."/>
            <person name="Thorpe A."/>
            <person name="Torcasso W."/>
            <person name="Tracey A."/>
            <person name="Tromans A."/>
            <person name="Tsolas J."/>
            <person name="Wall M."/>
            <person name="Walsh J."/>
            <person name="Wang H."/>
            <person name="Weinstock K."/>
            <person name="West A.P."/>
            <person name="Willey D.L."/>
            <person name="Whitehead S.L."/>
            <person name="Wilming L."/>
            <person name="Wray P.W."/>
            <person name="Young L."/>
            <person name="Chen Y."/>
            <person name="Lovering R.C."/>
            <person name="Moschonas N.K."/>
            <person name="Siebert R."/>
            <person name="Fechtel K."/>
            <person name="Bentley D."/>
            <person name="Durbin R.M."/>
            <person name="Hubbard T."/>
            <person name="Doucette-Stamm L."/>
            <person name="Beck S."/>
            <person name="Smith D.R."/>
            <person name="Rogers J."/>
        </authorList>
    </citation>
    <scope>NUCLEOTIDE SEQUENCE [LARGE SCALE GENOMIC DNA]</scope>
</reference>
<reference key="4">
    <citation type="journal article" date="2004" name="Genome Res.">
        <title>The status, quality, and expansion of the NIH full-length cDNA project: the Mammalian Gene Collection (MGC).</title>
        <authorList>
            <consortium name="The MGC Project Team"/>
        </authorList>
    </citation>
    <scope>NUCLEOTIDE SEQUENCE [LARGE SCALE MRNA] (ISOFORM 2)</scope>
    <source>
        <tissue>Brain</tissue>
    </source>
</reference>
<reference key="5">
    <citation type="journal article" date="2009" name="Sci. Signal.">
        <title>Quantitative phosphoproteomic analysis of T cell receptor signaling reveals system-wide modulation of protein-protein interactions.</title>
        <authorList>
            <person name="Mayya V."/>
            <person name="Lundgren D.H."/>
            <person name="Hwang S.-I."/>
            <person name="Rezaul K."/>
            <person name="Wu L."/>
            <person name="Eng J.K."/>
            <person name="Rodionov V."/>
            <person name="Han D.K."/>
        </authorList>
    </citation>
    <scope>IDENTIFICATION BY MASS SPECTROMETRY [LARGE SCALE ANALYSIS]</scope>
    <source>
        <tissue>Leukemic T-cell</tissue>
    </source>
</reference>
<reference key="6">
    <citation type="submission" date="2007-08" db="PDB data bank">
        <title>Solution structure of first PDZ domain of PDZ domain containing protein 7.</title>
        <authorList>
            <consortium name="RIKEN structural genomics initiative (RSGI)"/>
        </authorList>
    </citation>
    <scope>STRUCTURE BY NMR OF 76-170</scope>
</reference>
<reference key="7">
    <citation type="journal article" date="2009" name="Hum. Mol. Genet.">
        <title>Homozygous disruption of PDZD7 by reciprocal translocation in a consanguineous family: a new member of the Usher syndrome protein interactome causing congenital hearing impairment.</title>
        <authorList>
            <person name="Schneider E."/>
            <person name="Marker T."/>
            <person name="Daser A."/>
            <person name="Frey-Mahn G."/>
            <person name="Beyer V."/>
            <person name="Farcas R."/>
            <person name="Schneider-Ratzke B."/>
            <person name="Kohlschmidt N."/>
            <person name="Grossmann B."/>
            <person name="Bauss K."/>
            <person name="Napiontek U."/>
            <person name="Keilmann A."/>
            <person name="Bartsch O."/>
            <person name="Zechner U."/>
            <person name="Wolfrum U."/>
            <person name="Haaf T."/>
        </authorList>
    </citation>
    <scope>INVOLVEMENT IN DFNB57</scope>
    <scope>TISSUE SPECIFICITY</scope>
    <scope>INTERACTION WITH USH1G</scope>
    <scope>CHROMOSOMAL TRANSLOCATION</scope>
</reference>
<reference key="8">
    <citation type="journal article" date="2015" name="Am. J. Med. Genet. A">
        <title>PDZD7 and hearing loss: More than just a modifier.</title>
        <authorList>
            <person name="Booth K.T."/>
            <person name="Azaiez H."/>
            <person name="Kahrizi K."/>
            <person name="Simpson A.C."/>
            <person name="Tollefson W.T."/>
            <person name="Sloan C.M."/>
            <person name="Meyer N.C."/>
            <person name="Babanejad M."/>
            <person name="Ardalani F."/>
            <person name="Arzhangi S."/>
            <person name="Schnieders M.J."/>
            <person name="Najmabadi H."/>
            <person name="Smith R.J."/>
        </authorList>
    </citation>
    <scope>INVOLVEMENT IN DFNB57</scope>
    <scope>VARIANTS DFNB57 ARG-103; ARG-228; ARG-285; 500-TYR--GLY-517 DEL AND 526-GLN--PRO-1033 DEL</scope>
</reference>
<reference key="9">
    <citation type="journal article" date="2016" name="Ear Hear.">
        <title>Confirmation of PDZD7 as a nonsyndromic hearing loss gene.</title>
        <authorList>
            <person name="Vona B."/>
            <person name="Lechno S."/>
            <person name="Hofrichter M.A."/>
            <person name="Hopf S."/>
            <person name="Laeig A.K."/>
            <person name="Haaf T."/>
            <person name="Keilmann A."/>
            <person name="Zechner U."/>
            <person name="Bartsch O."/>
        </authorList>
    </citation>
    <scope>INVOLVEMENT IN DFNB57</scope>
    <scope>VARIANT DFNB57 550-GLN--PRO-1033 DEL</scope>
</reference>
<reference key="10">
    <citation type="journal article" date="2018" name="Am. J. Med. Genet. A">
        <title>Novel recessive PDZD7 biallelic mutations in two Chinese families with non-syndromic hearing loss.</title>
        <authorList>
            <person name="Guan J."/>
            <person name="Wang H."/>
            <person name="Lan L."/>
            <person name="Wang L."/>
            <person name="Yang J."/>
            <person name="Xie L."/>
            <person name="Yin Z."/>
            <person name="Xiong W."/>
            <person name="Zhao L."/>
            <person name="Wang D."/>
            <person name="Wang Q."/>
        </authorList>
    </citation>
    <scope>INVOLVEMENT IN DFNB57</scope>
    <scope>VARIANT DFNB57 LEU-66</scope>
</reference>
<gene>
    <name evidence="10" type="primary">PDZD7</name>
    <name evidence="10" type="synonym">PDZK7</name>
</gene>
<dbReference type="EMBL" id="FJ617449">
    <property type="protein sequence ID" value="ACU45386.1"/>
    <property type="molecule type" value="mRNA"/>
</dbReference>
<dbReference type="EMBL" id="AK026862">
    <property type="protein sequence ID" value="BAB15577.1"/>
    <property type="molecule type" value="mRNA"/>
</dbReference>
<dbReference type="EMBL" id="AL133215">
    <property type="status" value="NOT_ANNOTATED_CDS"/>
    <property type="molecule type" value="Genomic_DNA"/>
</dbReference>
<dbReference type="EMBL" id="BC029054">
    <property type="protein sequence ID" value="AAH29054.1"/>
    <property type="molecule type" value="mRNA"/>
</dbReference>
<dbReference type="CCDS" id="CCDS31269.1">
    <molecule id="Q9H5P4-1"/>
</dbReference>
<dbReference type="CCDS" id="CCDS73182.1">
    <molecule id="Q9H5P4-3"/>
</dbReference>
<dbReference type="RefSeq" id="NP_001182192.1">
    <molecule id="Q9H5P4-3"/>
    <property type="nucleotide sequence ID" value="NM_001195263.2"/>
</dbReference>
<dbReference type="RefSeq" id="NP_079171.1">
    <molecule id="Q9H5P4-1"/>
    <property type="nucleotide sequence ID" value="NM_024895.5"/>
</dbReference>
<dbReference type="RefSeq" id="XP_011538479.1">
    <molecule id="Q9H5P4-3"/>
    <property type="nucleotide sequence ID" value="XM_011540177.4"/>
</dbReference>
<dbReference type="RefSeq" id="XP_047281723.1">
    <molecule id="Q9H5P4-3"/>
    <property type="nucleotide sequence ID" value="XM_047425767.1"/>
</dbReference>
<dbReference type="RefSeq" id="XP_047281727.1">
    <molecule id="Q9H5P4-1"/>
    <property type="nucleotide sequence ID" value="XM_047425771.1"/>
</dbReference>
<dbReference type="RefSeq" id="XP_054222738.1">
    <molecule id="Q9H5P4-3"/>
    <property type="nucleotide sequence ID" value="XM_054366763.1"/>
</dbReference>
<dbReference type="RefSeq" id="XP_054222739.1">
    <molecule id="Q9H5P4-3"/>
    <property type="nucleotide sequence ID" value="XM_054366764.1"/>
</dbReference>
<dbReference type="RefSeq" id="XP_054222748.1">
    <molecule id="Q9H5P4-1"/>
    <property type="nucleotide sequence ID" value="XM_054366773.1"/>
</dbReference>
<dbReference type="PDB" id="2EEH">
    <property type="method" value="NMR"/>
    <property type="chains" value="A=81-167"/>
</dbReference>
<dbReference type="PDB" id="7PC5">
    <property type="method" value="X-ray"/>
    <property type="resolution" value="1.70 A"/>
    <property type="chains" value="A=858-953"/>
</dbReference>
<dbReference type="PDBsum" id="2EEH"/>
<dbReference type="PDBsum" id="7PC5"/>
<dbReference type="SMR" id="Q9H5P4"/>
<dbReference type="BioGRID" id="123024">
    <property type="interactions" value="10"/>
</dbReference>
<dbReference type="ComplexPortal" id="CPX-2821">
    <property type="entry name" value="USH2 complex"/>
</dbReference>
<dbReference type="CORUM" id="Q9H5P4"/>
<dbReference type="FunCoup" id="Q9H5P4">
    <property type="interactions" value="24"/>
</dbReference>
<dbReference type="IntAct" id="Q9H5P4">
    <property type="interactions" value="4"/>
</dbReference>
<dbReference type="STRING" id="9606.ENSP00000480489"/>
<dbReference type="GlyGen" id="Q9H5P4">
    <property type="glycosylation" value="3 sites, 1 O-linked glycan (1 site)"/>
</dbReference>
<dbReference type="iPTMnet" id="Q9H5P4"/>
<dbReference type="PhosphoSitePlus" id="Q9H5P4"/>
<dbReference type="BioMuta" id="PDZD7"/>
<dbReference type="DMDM" id="73621380"/>
<dbReference type="jPOST" id="Q9H5P4"/>
<dbReference type="MassIVE" id="Q9H5P4"/>
<dbReference type="PaxDb" id="9606-ENSP00000480489"/>
<dbReference type="PeptideAtlas" id="Q9H5P4"/>
<dbReference type="Antibodypedia" id="31245">
    <property type="antibodies" value="55 antibodies from 13 providers"/>
</dbReference>
<dbReference type="DNASU" id="79955"/>
<dbReference type="Ensembl" id="ENST00000370215.7">
    <molecule id="Q9H5P4-1"/>
    <property type="protein sequence ID" value="ENSP00000359234.3"/>
    <property type="gene ID" value="ENSG00000186862.20"/>
</dbReference>
<dbReference type="Ensembl" id="ENST00000619208.6">
    <molecule id="Q9H5P4-3"/>
    <property type="protein sequence ID" value="ENSP00000480489.1"/>
    <property type="gene ID" value="ENSG00000186862.20"/>
</dbReference>
<dbReference type="GeneID" id="79955"/>
<dbReference type="KEGG" id="hsa:79955"/>
<dbReference type="MANE-Select" id="ENST00000619208.6">
    <property type="protein sequence ID" value="ENSP00000480489.1"/>
    <property type="RefSeq nucleotide sequence ID" value="NM_001195263.2"/>
    <property type="RefSeq protein sequence ID" value="NP_001182192.1"/>
</dbReference>
<dbReference type="UCSC" id="uc001kso.3">
    <molecule id="Q9H5P4-3"/>
    <property type="organism name" value="human"/>
</dbReference>
<dbReference type="AGR" id="HGNC:26257"/>
<dbReference type="CTD" id="79955"/>
<dbReference type="DisGeNET" id="79955"/>
<dbReference type="GeneCards" id="PDZD7"/>
<dbReference type="HGNC" id="HGNC:26257">
    <property type="gene designation" value="PDZD7"/>
</dbReference>
<dbReference type="HPA" id="ENSG00000186862">
    <property type="expression patterns" value="Group enriched (brain, intestine, pituitary gland)"/>
</dbReference>
<dbReference type="MalaCards" id="PDZD7"/>
<dbReference type="MIM" id="276901">
    <property type="type" value="phenotype"/>
</dbReference>
<dbReference type="MIM" id="605472">
    <property type="type" value="phenotype"/>
</dbReference>
<dbReference type="MIM" id="612971">
    <property type="type" value="gene"/>
</dbReference>
<dbReference type="MIM" id="618003">
    <property type="type" value="phenotype"/>
</dbReference>
<dbReference type="neXtProt" id="NX_Q9H5P4"/>
<dbReference type="OpenTargets" id="ENSG00000186862"/>
<dbReference type="Orphanet" id="231178">
    <property type="disease" value="Usher syndrome type 2"/>
</dbReference>
<dbReference type="PharmGKB" id="PA142671189"/>
<dbReference type="VEuPathDB" id="HostDB:ENSG00000186862"/>
<dbReference type="eggNOG" id="KOG3528">
    <property type="taxonomic scope" value="Eukaryota"/>
</dbReference>
<dbReference type="GeneTree" id="ENSGT00950000183002"/>
<dbReference type="HOGENOM" id="CLU_304541_0_0_1"/>
<dbReference type="InParanoid" id="Q9H5P4"/>
<dbReference type="OMA" id="HWLPEPP"/>
<dbReference type="OrthoDB" id="10029564at2759"/>
<dbReference type="PAN-GO" id="Q9H5P4">
    <property type="GO annotations" value="6 GO annotations based on evolutionary models"/>
</dbReference>
<dbReference type="PhylomeDB" id="Q9H5P4"/>
<dbReference type="TreeFam" id="TF325033"/>
<dbReference type="PathwayCommons" id="Q9H5P4"/>
<dbReference type="SignaLink" id="Q9H5P4"/>
<dbReference type="BioGRID-ORCS" id="79955">
    <property type="hits" value="22 hits in 1152 CRISPR screens"/>
</dbReference>
<dbReference type="EvolutionaryTrace" id="Q9H5P4"/>
<dbReference type="GenomeRNAi" id="79955"/>
<dbReference type="Pharos" id="Q9H5P4">
    <property type="development level" value="Tbio"/>
</dbReference>
<dbReference type="PRO" id="PR:Q9H5P4"/>
<dbReference type="Proteomes" id="UP000005640">
    <property type="component" value="Chromosome 10"/>
</dbReference>
<dbReference type="RNAct" id="Q9H5P4">
    <property type="molecule type" value="protein"/>
</dbReference>
<dbReference type="Bgee" id="ENSG00000186862">
    <property type="expression patterns" value="Expressed in right hemisphere of cerebellum and 119 other cell types or tissues"/>
</dbReference>
<dbReference type="ExpressionAtlas" id="Q9H5P4">
    <property type="expression patterns" value="baseline and differential"/>
</dbReference>
<dbReference type="GO" id="GO:0036064">
    <property type="term" value="C:ciliary basal body"/>
    <property type="evidence" value="ECO:0000314"/>
    <property type="project" value="HPA"/>
</dbReference>
<dbReference type="GO" id="GO:0005929">
    <property type="term" value="C:cilium"/>
    <property type="evidence" value="ECO:0000314"/>
    <property type="project" value="HPA"/>
</dbReference>
<dbReference type="GO" id="GO:0005615">
    <property type="term" value="C:extracellular space"/>
    <property type="evidence" value="ECO:0007005"/>
    <property type="project" value="UniProtKB"/>
</dbReference>
<dbReference type="GO" id="GO:0005654">
    <property type="term" value="C:nucleoplasm"/>
    <property type="evidence" value="ECO:0000314"/>
    <property type="project" value="HPA"/>
</dbReference>
<dbReference type="GO" id="GO:0005634">
    <property type="term" value="C:nucleus"/>
    <property type="evidence" value="ECO:0000314"/>
    <property type="project" value="UniProtKB"/>
</dbReference>
<dbReference type="GO" id="GO:0005886">
    <property type="term" value="C:plasma membrane"/>
    <property type="evidence" value="ECO:0000318"/>
    <property type="project" value="GO_Central"/>
</dbReference>
<dbReference type="GO" id="GO:0002141">
    <property type="term" value="C:stereocilia ankle link"/>
    <property type="evidence" value="ECO:0000250"/>
    <property type="project" value="UniProtKB"/>
</dbReference>
<dbReference type="GO" id="GO:0002142">
    <property type="term" value="C:stereocilia ankle link complex"/>
    <property type="evidence" value="ECO:0000250"/>
    <property type="project" value="UniProtKB"/>
</dbReference>
<dbReference type="GO" id="GO:0032420">
    <property type="term" value="C:stereocilium"/>
    <property type="evidence" value="ECO:0000250"/>
    <property type="project" value="UniProtKB"/>
</dbReference>
<dbReference type="GO" id="GO:0032426">
    <property type="term" value="C:stereocilium tip"/>
    <property type="evidence" value="ECO:0000318"/>
    <property type="project" value="GO_Central"/>
</dbReference>
<dbReference type="GO" id="GO:1990696">
    <property type="term" value="C:USH2 complex"/>
    <property type="evidence" value="ECO:0000250"/>
    <property type="project" value="ComplexPortal"/>
</dbReference>
<dbReference type="GO" id="GO:0042802">
    <property type="term" value="F:identical protein binding"/>
    <property type="evidence" value="ECO:0007669"/>
    <property type="project" value="Ensembl"/>
</dbReference>
<dbReference type="GO" id="GO:0060117">
    <property type="term" value="P:auditory receptor cell development"/>
    <property type="evidence" value="ECO:0000250"/>
    <property type="project" value="UniProtKB"/>
</dbReference>
<dbReference type="GO" id="GO:0060088">
    <property type="term" value="P:auditory receptor cell stereocilium organization"/>
    <property type="evidence" value="ECO:0000250"/>
    <property type="project" value="UniProtKB"/>
</dbReference>
<dbReference type="GO" id="GO:0050910">
    <property type="term" value="P:detection of mechanical stimulus involved in sensory perception of sound"/>
    <property type="evidence" value="ECO:0000250"/>
    <property type="project" value="UniProtKB"/>
</dbReference>
<dbReference type="GO" id="GO:0051649">
    <property type="term" value="P:establishment of localization in cell"/>
    <property type="evidence" value="ECO:0007669"/>
    <property type="project" value="Ensembl"/>
</dbReference>
<dbReference type="GO" id="GO:0045184">
    <property type="term" value="P:establishment of protein localization"/>
    <property type="evidence" value="ECO:0000250"/>
    <property type="project" value="UniProtKB"/>
</dbReference>
<dbReference type="GO" id="GO:0060113">
    <property type="term" value="P:inner ear receptor cell differentiation"/>
    <property type="evidence" value="ECO:0000303"/>
    <property type="project" value="ComplexPortal"/>
</dbReference>
<dbReference type="GO" id="GO:0007605">
    <property type="term" value="P:sensory perception of sound"/>
    <property type="evidence" value="ECO:0000318"/>
    <property type="project" value="GO_Central"/>
</dbReference>
<dbReference type="CDD" id="cd07358">
    <property type="entry name" value="HN_PDZD7_like"/>
    <property type="match status" value="1"/>
</dbReference>
<dbReference type="CDD" id="cd10833">
    <property type="entry name" value="PDZ1_PDZD7-like"/>
    <property type="match status" value="1"/>
</dbReference>
<dbReference type="CDD" id="cd10834">
    <property type="entry name" value="PDZ2_PDZD7-like"/>
    <property type="match status" value="1"/>
</dbReference>
<dbReference type="CDD" id="cd06751">
    <property type="entry name" value="PDZ3_PDZD7-like"/>
    <property type="match status" value="1"/>
</dbReference>
<dbReference type="FunFam" id="1.20.1160.20:FF:000007">
    <property type="entry name" value="PDZ domain containing 7"/>
    <property type="match status" value="1"/>
</dbReference>
<dbReference type="FunFam" id="2.30.42.10:FF:000090">
    <property type="entry name" value="PDZ domain containing 7"/>
    <property type="match status" value="1"/>
</dbReference>
<dbReference type="FunFam" id="2.30.42.10:FF:000092">
    <property type="entry name" value="PDZ domain containing 7"/>
    <property type="match status" value="1"/>
</dbReference>
<dbReference type="FunFam" id="2.30.42.10:FF:000171">
    <property type="entry name" value="PDZ domain containing 7"/>
    <property type="match status" value="1"/>
</dbReference>
<dbReference type="Gene3D" id="1.20.1160.20">
    <property type="match status" value="1"/>
</dbReference>
<dbReference type="Gene3D" id="2.30.42.10">
    <property type="match status" value="3"/>
</dbReference>
<dbReference type="InterPro" id="IPR001478">
    <property type="entry name" value="PDZ"/>
</dbReference>
<dbReference type="InterPro" id="IPR036034">
    <property type="entry name" value="PDZ_sf"/>
</dbReference>
<dbReference type="InterPro" id="IPR042786">
    <property type="entry name" value="PDZD7_HN-like"/>
</dbReference>
<dbReference type="InterPro" id="IPR051844">
    <property type="entry name" value="USH2_Complex_Protein"/>
</dbReference>
<dbReference type="PANTHER" id="PTHR23116">
    <property type="entry name" value="PDZ DOMAIN CONTAINING WHIRLIN AND HARMONIN-RELATED"/>
    <property type="match status" value="1"/>
</dbReference>
<dbReference type="PANTHER" id="PTHR23116:SF29">
    <property type="entry name" value="PDZ DOMAIN-CONTAINING PROTEIN 7"/>
    <property type="match status" value="1"/>
</dbReference>
<dbReference type="Pfam" id="PF00595">
    <property type="entry name" value="PDZ"/>
    <property type="match status" value="3"/>
</dbReference>
<dbReference type="SMART" id="SM00228">
    <property type="entry name" value="PDZ"/>
    <property type="match status" value="3"/>
</dbReference>
<dbReference type="SUPFAM" id="SSF50156">
    <property type="entry name" value="PDZ domain-like"/>
    <property type="match status" value="3"/>
</dbReference>
<dbReference type="PROSITE" id="PS50106">
    <property type="entry name" value="PDZ"/>
    <property type="match status" value="3"/>
</dbReference>
<comment type="function">
    <text evidence="1">In cochlear developing hair cells, essential in organizing the USH2 complex at stereocilia ankle links. Blocks inhibition of adenylate cyclase activity mediated by ADGRV1.</text>
</comment>
<comment type="subunit">
    <text evidence="1 4 5">Homodimerizes (via PDZ2 domain). Component of USH2 complex, composed of ADGRV1, PDZD7, USH2A and WHRN. Interacts (via PDZ domains) with WHRN; the interaction is direct (By similarity). Interacts with USH1G (PubMed:19028668). Interacts with ADGRV1 (via the cytoplasmic region) (PubMed:20440071). Interacts with USH2A (via the cytoplasmic region) (PubMed:20440071). Interacts with MYO7A (via MyTH4-FERM domains) (By similarity).</text>
</comment>
<comment type="interaction">
    <interactant intactId="EBI-20859318">
        <id>Q9H5P4</id>
    </interactant>
    <interactant intactId="EBI-7851128">
        <id>Q8WXG9</id>
        <label>ADGRV1</label>
    </interactant>
    <organismsDiffer>false</organismsDiffer>
    <experiments>3</experiments>
</comment>
<comment type="interaction">
    <interactant intactId="EBI-20859318">
        <id>Q9H5P4</id>
    </interactant>
    <interactant intactId="EBI-9996372">
        <id>O75445</id>
        <label>USH2A</label>
    </interactant>
    <organismsDiffer>false</organismsDiffer>
    <experiments>2</experiments>
</comment>
<comment type="subcellular location">
    <subcellularLocation>
        <location evidence="5">Cell projection</location>
        <location evidence="5">Cilium</location>
    </subcellularLocation>
    <subcellularLocation>
        <location evidence="5">Nucleus</location>
    </subcellularLocation>
    <subcellularLocation>
        <location evidence="1">Cell projection</location>
        <location evidence="1">Stereocilium</location>
    </subcellularLocation>
    <text evidence="1">Localizes at the ankle region of the stereocilia.</text>
</comment>
<comment type="alternative products">
    <event type="alternative splicing"/>
    <isoform>
        <id>Q9H5P4-3</id>
        <name>1</name>
        <sequence type="displayed"/>
    </isoform>
    <isoform>
        <id>Q9H5P4-1</id>
        <name>2</name>
        <sequence type="described" ref="VSP_059942 VSP_059943"/>
    </isoform>
    <isoform>
        <id>Q9H5P4-2</id>
        <name>3</name>
        <sequence type="described" ref="VSP_059941"/>
    </isoform>
</comment>
<comment type="tissue specificity">
    <text evidence="4 5">Weakly expressed in the inner ear. Expressed in the retinal pigment epithelium.</text>
</comment>
<comment type="disease" evidence="4 6 7 8">
    <disease id="DI-05260">
        <name>Deafness, autosomal recessive, 57</name>
        <acronym>DFNB57</acronym>
        <description>A form of non-syndromic, sensorineural deafness characterized by symmetric, bilateral hearing loss with onset in early childhood. Vestibular function is preserved. Sensorineural deafness results from damage to the neural receptors of the inner ear, the nerve pathways to the brain, or the area of the brain that receives sound information. DFNB57 severity ranges from moderate to severe.</description>
        <dbReference type="MIM" id="618003"/>
    </disease>
    <text>The disease is caused by variants affecting the gene represented in this entry.</text>
</comment>
<comment type="disease">
    <text evidence="4">A chromosomal aberration disrupting PDZD7 has been found in patients with non-syndromic sensorineural deafness. Translocation t(10;11),t(10;11).</text>
</comment>
<comment type="disease" evidence="5">
    <disease id="DI-01119">
        <name>Usher syndrome 2C</name>
        <acronym>USH2C</acronym>
        <description>USH is a genetically heterogeneous condition characterized by the association of retinitis pigmentosa with sensorineural deafness. Age at onset and differences in auditory and vestibular function distinguish Usher syndrome type 1 (USH1), Usher syndrome type 2 (USH2) and Usher syndrome type 3 (USH3). USH2 is characterized by congenital mild hearing impairment with normal vestibular responses.</description>
        <dbReference type="MIM" id="605472"/>
    </disease>
    <text evidence="5">The disease is caused by variants affecting distinct genetic loci, including the gene represented in this entry. A PDZD7 mutation has been found in combination with a mutation in ADGRV1 in a patient affected by Usher syndrome, suggesting PDZD7 mutations contribute to digenic Usher syndrome.</text>
</comment>
<comment type="disease" evidence="5">
    <disease id="DI-01118">
        <name>Usher syndrome 2A</name>
        <acronym>USH2A</acronym>
        <description>USH is a genetically heterogeneous condition characterized by the association of retinitis pigmentosa with sensorineural deafness. Age at onset and differences in auditory and vestibular function distinguish Usher syndrome type 1 (USH1), Usher syndrome type 2 (USH2) and Usher syndrome type 3 (USH3). USH2 is characterized by congenital mild hearing impairment with normal vestibular responses.</description>
        <dbReference type="MIM" id="276901"/>
    </disease>
    <text>The gene represented in this entry acts as a disease modifier.</text>
</comment>
<organism>
    <name type="scientific">Homo sapiens</name>
    <name type="common">Human</name>
    <dbReference type="NCBI Taxonomy" id="9606"/>
    <lineage>
        <taxon>Eukaryota</taxon>
        <taxon>Metazoa</taxon>
        <taxon>Chordata</taxon>
        <taxon>Craniata</taxon>
        <taxon>Vertebrata</taxon>
        <taxon>Euteleostomi</taxon>
        <taxon>Mammalia</taxon>
        <taxon>Eutheria</taxon>
        <taxon>Euarchontoglires</taxon>
        <taxon>Primates</taxon>
        <taxon>Haplorrhini</taxon>
        <taxon>Catarrhini</taxon>
        <taxon>Hominidae</taxon>
        <taxon>Homo</taxon>
    </lineage>
</organism>